<keyword id="KW-0067">ATP-binding</keyword>
<keyword id="KW-0997">Cell inner membrane</keyword>
<keyword id="KW-1003">Cell membrane</keyword>
<keyword id="KW-0201">Cytochrome c-type biogenesis</keyword>
<keyword id="KW-0472">Membrane</keyword>
<keyword id="KW-0547">Nucleotide-binding</keyword>
<keyword id="KW-1185">Reference proteome</keyword>
<keyword id="KW-1278">Translocase</keyword>
<keyword id="KW-0813">Transport</keyword>
<feature type="chain" id="PRO_0000092194" description="Cytochrome c biogenesis ATP-binding export protein CcmA">
    <location>
        <begin position="1"/>
        <end position="216"/>
    </location>
</feature>
<feature type="domain" description="ABC transporter" evidence="1">
    <location>
        <begin position="2"/>
        <end position="215"/>
    </location>
</feature>
<feature type="binding site" evidence="1">
    <location>
        <begin position="34"/>
        <end position="41"/>
    </location>
    <ligand>
        <name>ATP</name>
        <dbReference type="ChEBI" id="CHEBI:30616"/>
    </ligand>
</feature>
<proteinExistence type="inferred from homology"/>
<gene>
    <name evidence="1" type="primary">ccmA</name>
    <name type="ordered locus">PBPRA0948</name>
</gene>
<accession>Q6LTL7</accession>
<evidence type="ECO:0000255" key="1">
    <source>
        <dbReference type="HAMAP-Rule" id="MF_01707"/>
    </source>
</evidence>
<dbReference type="EC" id="7.6.2.5" evidence="1"/>
<dbReference type="EMBL" id="CR378666">
    <property type="protein sequence ID" value="CAG19359.1"/>
    <property type="molecule type" value="Genomic_DNA"/>
</dbReference>
<dbReference type="RefSeq" id="WP_011217693.1">
    <property type="nucleotide sequence ID" value="NC_006370.1"/>
</dbReference>
<dbReference type="SMR" id="Q6LTL7"/>
<dbReference type="STRING" id="298386.PBPRA0948"/>
<dbReference type="KEGG" id="ppr:PBPRA0948"/>
<dbReference type="eggNOG" id="COG4133">
    <property type="taxonomic scope" value="Bacteria"/>
</dbReference>
<dbReference type="HOGENOM" id="CLU_000604_1_2_6"/>
<dbReference type="Proteomes" id="UP000000593">
    <property type="component" value="Chromosome 1"/>
</dbReference>
<dbReference type="GO" id="GO:0005886">
    <property type="term" value="C:plasma membrane"/>
    <property type="evidence" value="ECO:0007669"/>
    <property type="project" value="UniProtKB-SubCell"/>
</dbReference>
<dbReference type="GO" id="GO:0015439">
    <property type="term" value="F:ABC-type heme transporter activity"/>
    <property type="evidence" value="ECO:0007669"/>
    <property type="project" value="UniProtKB-EC"/>
</dbReference>
<dbReference type="GO" id="GO:0005524">
    <property type="term" value="F:ATP binding"/>
    <property type="evidence" value="ECO:0007669"/>
    <property type="project" value="UniProtKB-KW"/>
</dbReference>
<dbReference type="GO" id="GO:0016887">
    <property type="term" value="F:ATP hydrolysis activity"/>
    <property type="evidence" value="ECO:0007669"/>
    <property type="project" value="InterPro"/>
</dbReference>
<dbReference type="GO" id="GO:0017004">
    <property type="term" value="P:cytochrome complex assembly"/>
    <property type="evidence" value="ECO:0007669"/>
    <property type="project" value="UniProtKB-KW"/>
</dbReference>
<dbReference type="Gene3D" id="3.40.50.300">
    <property type="entry name" value="P-loop containing nucleotide triphosphate hydrolases"/>
    <property type="match status" value="1"/>
</dbReference>
<dbReference type="InterPro" id="IPR003593">
    <property type="entry name" value="AAA+_ATPase"/>
</dbReference>
<dbReference type="InterPro" id="IPR003439">
    <property type="entry name" value="ABC_transporter-like_ATP-bd"/>
</dbReference>
<dbReference type="InterPro" id="IPR017871">
    <property type="entry name" value="ABC_transporter-like_CS"/>
</dbReference>
<dbReference type="InterPro" id="IPR005895">
    <property type="entry name" value="ABC_transptr_haem_export_CcmA"/>
</dbReference>
<dbReference type="InterPro" id="IPR027417">
    <property type="entry name" value="P-loop_NTPase"/>
</dbReference>
<dbReference type="NCBIfam" id="TIGR01189">
    <property type="entry name" value="ccmA"/>
    <property type="match status" value="1"/>
</dbReference>
<dbReference type="NCBIfam" id="NF010061">
    <property type="entry name" value="PRK13538.1"/>
    <property type="match status" value="1"/>
</dbReference>
<dbReference type="PANTHER" id="PTHR43499">
    <property type="entry name" value="ABC TRANSPORTER I FAMILY MEMBER 1"/>
    <property type="match status" value="1"/>
</dbReference>
<dbReference type="PANTHER" id="PTHR43499:SF1">
    <property type="entry name" value="ABC TRANSPORTER I FAMILY MEMBER 1"/>
    <property type="match status" value="1"/>
</dbReference>
<dbReference type="Pfam" id="PF00005">
    <property type="entry name" value="ABC_tran"/>
    <property type="match status" value="1"/>
</dbReference>
<dbReference type="SMART" id="SM00382">
    <property type="entry name" value="AAA"/>
    <property type="match status" value="1"/>
</dbReference>
<dbReference type="SUPFAM" id="SSF52540">
    <property type="entry name" value="P-loop containing nucleoside triphosphate hydrolases"/>
    <property type="match status" value="1"/>
</dbReference>
<dbReference type="PROSITE" id="PS00211">
    <property type="entry name" value="ABC_TRANSPORTER_1"/>
    <property type="match status" value="1"/>
</dbReference>
<dbReference type="PROSITE" id="PS50893">
    <property type="entry name" value="ABC_TRANSPORTER_2"/>
    <property type="match status" value="1"/>
</dbReference>
<dbReference type="PROSITE" id="PS51243">
    <property type="entry name" value="CCMA"/>
    <property type="match status" value="1"/>
</dbReference>
<organism>
    <name type="scientific">Photobacterium profundum (strain SS9)</name>
    <dbReference type="NCBI Taxonomy" id="298386"/>
    <lineage>
        <taxon>Bacteria</taxon>
        <taxon>Pseudomonadati</taxon>
        <taxon>Pseudomonadota</taxon>
        <taxon>Gammaproteobacteria</taxon>
        <taxon>Vibrionales</taxon>
        <taxon>Vibrionaceae</taxon>
        <taxon>Photobacterium</taxon>
    </lineage>
</organism>
<name>CCMA_PHOPR</name>
<reference key="1">
    <citation type="journal article" date="2005" name="Science">
        <title>Life at depth: Photobacterium profundum genome sequence and expression analysis.</title>
        <authorList>
            <person name="Vezzi A."/>
            <person name="Campanaro S."/>
            <person name="D'Angelo M."/>
            <person name="Simonato F."/>
            <person name="Vitulo N."/>
            <person name="Lauro F.M."/>
            <person name="Cestaro A."/>
            <person name="Malacrida G."/>
            <person name="Simionati B."/>
            <person name="Cannata N."/>
            <person name="Romualdi C."/>
            <person name="Bartlett D.H."/>
            <person name="Valle G."/>
        </authorList>
    </citation>
    <scope>NUCLEOTIDE SEQUENCE [LARGE SCALE GENOMIC DNA]</scope>
    <source>
        <strain>ATCC BAA-1253 / SS9</strain>
    </source>
</reference>
<comment type="function">
    <text evidence="1">Part of the ABC transporter complex CcmAB involved in the biogenesis of c-type cytochromes; once thought to export heme, this seems not to be the case, but its exact role is uncertain. Responsible for energy coupling to the transport system.</text>
</comment>
<comment type="catalytic activity">
    <reaction evidence="1">
        <text>heme b(in) + ATP + H2O = heme b(out) + ADP + phosphate + H(+)</text>
        <dbReference type="Rhea" id="RHEA:19261"/>
        <dbReference type="ChEBI" id="CHEBI:15377"/>
        <dbReference type="ChEBI" id="CHEBI:15378"/>
        <dbReference type="ChEBI" id="CHEBI:30616"/>
        <dbReference type="ChEBI" id="CHEBI:43474"/>
        <dbReference type="ChEBI" id="CHEBI:60344"/>
        <dbReference type="ChEBI" id="CHEBI:456216"/>
        <dbReference type="EC" id="7.6.2.5"/>
    </reaction>
</comment>
<comment type="subunit">
    <text evidence="1">The complex is composed of two ATP-binding proteins (CcmA) and two transmembrane proteins (CcmB).</text>
</comment>
<comment type="subcellular location">
    <subcellularLocation>
        <location evidence="1">Cell inner membrane</location>
        <topology evidence="1">Peripheral membrane protein</topology>
    </subcellularLocation>
</comment>
<comment type="similarity">
    <text evidence="1">Belongs to the ABC transporter superfamily. CcmA exporter (TC 3.A.1.107) family.</text>
</comment>
<protein>
    <recommendedName>
        <fullName evidence="1">Cytochrome c biogenesis ATP-binding export protein CcmA</fullName>
        <ecNumber evidence="1">7.6.2.5</ecNumber>
    </recommendedName>
    <alternativeName>
        <fullName evidence="1">Heme exporter protein A</fullName>
    </alternativeName>
</protein>
<sequence>MLSVEELSCVRDERVLFDNLSFTISSGELIQIEGHNGAGKTTLLRIIAGLGRADSGQVCWKSEGIESAREDYYQDLLFLGHQTGVKRELTAYENLAFFQAMHNESIDQDMSGKPPVLGDESLWQALAQVGLAGREDVLAGQLSAGQQRRVALARLWISNHKLWILDEPLTAIDKQGVKVLESLFLSHVERGGIVLLTTHQDMFADSNHLRKIKLGQ</sequence>